<proteinExistence type="inferred from homology"/>
<gene>
    <name evidence="1" type="primary">gH</name>
</gene>
<protein>
    <recommendedName>
        <fullName evidence="1">Envelope glycoprotein H</fullName>
        <shortName evidence="1">gH</shortName>
    </recommendedName>
</protein>
<reference key="1">
    <citation type="journal article" date="1993" name="J. Gen. Virol.">
        <title>Identification and sequence analysis of the homologues of the herpes simplex virus type 1 glycoprotein H in Marek's disease virus and the herpesvirus of turkeys.</title>
        <authorList>
            <person name="Scott S.D."/>
            <person name="Smith G.D."/>
            <person name="Ross N.L.J."/>
            <person name="Binns M.M."/>
        </authorList>
    </citation>
    <scope>NUCLEOTIDE SEQUENCE [GENOMIC DNA]</scope>
</reference>
<organism>
    <name type="scientific">Gallid herpesvirus 2 (strain RB-1b)</name>
    <name type="common">GaHV-2</name>
    <name type="synonym">Marek's disease herpesvirus type 1</name>
    <dbReference type="NCBI Taxonomy" id="33707"/>
    <lineage>
        <taxon>Viruses</taxon>
        <taxon>Duplodnaviria</taxon>
        <taxon>Heunggongvirae</taxon>
        <taxon>Peploviricota</taxon>
        <taxon>Herviviricetes</taxon>
        <taxon>Herpesvirales</taxon>
        <taxon>Orthoherpesviridae</taxon>
        <taxon>Alphaherpesvirinae</taxon>
        <taxon>Mardivirus</taxon>
        <taxon>Mardivirus gallidalpha2</taxon>
        <taxon>Gallid alphaherpesvirus 2</taxon>
    </lineage>
</organism>
<evidence type="ECO:0000255" key="1">
    <source>
        <dbReference type="HAMAP-Rule" id="MF_04033"/>
    </source>
</evidence>
<evidence type="ECO:0000256" key="2">
    <source>
        <dbReference type="SAM" id="MobiDB-lite"/>
    </source>
</evidence>
<dbReference type="EMBL" id="S62555">
    <property type="protein sequence ID" value="AAP13936.1"/>
    <property type="molecule type" value="Genomic_DNA"/>
</dbReference>
<dbReference type="SMR" id="P36336"/>
<dbReference type="GlyCosmos" id="P36336">
    <property type="glycosylation" value="10 sites, No reported glycans"/>
</dbReference>
<dbReference type="GO" id="GO:0044175">
    <property type="term" value="C:host cell endosome membrane"/>
    <property type="evidence" value="ECO:0007669"/>
    <property type="project" value="UniProtKB-SubCell"/>
</dbReference>
<dbReference type="GO" id="GO:0020002">
    <property type="term" value="C:host cell plasma membrane"/>
    <property type="evidence" value="ECO:0007669"/>
    <property type="project" value="UniProtKB-SubCell"/>
</dbReference>
<dbReference type="GO" id="GO:0016020">
    <property type="term" value="C:membrane"/>
    <property type="evidence" value="ECO:0007669"/>
    <property type="project" value="UniProtKB-KW"/>
</dbReference>
<dbReference type="GO" id="GO:0019031">
    <property type="term" value="C:viral envelope"/>
    <property type="evidence" value="ECO:0007669"/>
    <property type="project" value="UniProtKB-KW"/>
</dbReference>
<dbReference type="GO" id="GO:0055036">
    <property type="term" value="C:virion membrane"/>
    <property type="evidence" value="ECO:0007669"/>
    <property type="project" value="UniProtKB-SubCell"/>
</dbReference>
<dbReference type="GO" id="GO:0019064">
    <property type="term" value="P:fusion of virus membrane with host plasma membrane"/>
    <property type="evidence" value="ECO:0007669"/>
    <property type="project" value="UniProtKB-KW"/>
</dbReference>
<dbReference type="GO" id="GO:0046718">
    <property type="term" value="P:symbiont entry into host cell"/>
    <property type="evidence" value="ECO:0007669"/>
    <property type="project" value="UniProtKB-KW"/>
</dbReference>
<dbReference type="Gene3D" id="1.20.58.1340">
    <property type="match status" value="1"/>
</dbReference>
<dbReference type="Gene3D" id="3.30.500.50">
    <property type="match status" value="1"/>
</dbReference>
<dbReference type="Gene3D" id="2.60.40.3190">
    <property type="entry name" value="Herpesvirus glycoprotein H, C-terminal domain"/>
    <property type="match status" value="1"/>
</dbReference>
<dbReference type="HAMAP" id="MF_04033">
    <property type="entry name" value="HSV_GH"/>
    <property type="match status" value="1"/>
</dbReference>
<dbReference type="InterPro" id="IPR003493">
    <property type="entry name" value="Herpes_gH"/>
</dbReference>
<dbReference type="InterPro" id="IPR035305">
    <property type="entry name" value="Herpes_glycoH_C"/>
</dbReference>
<dbReference type="InterPro" id="IPR038172">
    <property type="entry name" value="Herpes_glycoH_C_sf"/>
</dbReference>
<dbReference type="Pfam" id="PF17488">
    <property type="entry name" value="Herpes_glycoH_C"/>
    <property type="match status" value="1"/>
</dbReference>
<dbReference type="Pfam" id="PF02489">
    <property type="entry name" value="Herpes_glycop_H"/>
    <property type="match status" value="2"/>
</dbReference>
<organismHost>
    <name type="scientific">Gallus gallus</name>
    <name type="common">Chicken</name>
    <dbReference type="NCBI Taxonomy" id="9031"/>
</organismHost>
<feature type="signal peptide" evidence="1">
    <location>
        <begin position="1"/>
        <end position="18"/>
    </location>
</feature>
<feature type="chain" id="PRO_0000038245" description="Envelope glycoprotein H" evidence="1">
    <location>
        <begin position="19"/>
        <end position="813"/>
    </location>
</feature>
<feature type="topological domain" description="Virion surface" evidence="1">
    <location>
        <begin position="19"/>
        <end position="769"/>
    </location>
</feature>
<feature type="transmembrane region" description="Helical" evidence="1">
    <location>
        <begin position="770"/>
        <end position="790"/>
    </location>
</feature>
<feature type="topological domain" description="Intravirion" evidence="1">
    <location>
        <begin position="791"/>
        <end position="813"/>
    </location>
</feature>
<feature type="region of interest" description="Disordered" evidence="2">
    <location>
        <begin position="135"/>
        <end position="159"/>
    </location>
</feature>
<feature type="region of interest" description="Interaction with gL" evidence="1">
    <location>
        <begin position="212"/>
        <end position="273"/>
    </location>
</feature>
<feature type="compositionally biased region" description="Basic and acidic residues" evidence="2">
    <location>
        <begin position="137"/>
        <end position="147"/>
    </location>
</feature>
<feature type="glycosylation site" description="N-linked (GlcNAc...) asparagine; by host" evidence="1">
    <location>
        <position position="62"/>
    </location>
</feature>
<feature type="glycosylation site" description="N-linked (GlcNAc...) asparagine; by host" evidence="1">
    <location>
        <position position="116"/>
    </location>
</feature>
<feature type="glycosylation site" description="N-linked (GlcNAc...) asparagine; by host" evidence="1">
    <location>
        <position position="247"/>
    </location>
</feature>
<feature type="glycosylation site" description="N-linked (GlcNAc...) asparagine; by host" evidence="1">
    <location>
        <position position="279"/>
    </location>
</feature>
<feature type="glycosylation site" description="N-linked (GlcNAc...) asparagine; by host" evidence="1">
    <location>
        <position position="410"/>
    </location>
</feature>
<feature type="glycosylation site" description="N-linked (GlcNAc...) asparagine; by host" evidence="1">
    <location>
        <position position="434"/>
    </location>
</feature>
<feature type="glycosylation site" description="N-linked (GlcNAc...) asparagine; by host" evidence="1">
    <location>
        <position position="469"/>
    </location>
</feature>
<feature type="glycosylation site" description="N-linked (GlcNAc...) asparagine; by host" evidence="1">
    <location>
        <position position="576"/>
    </location>
</feature>
<feature type="glycosylation site" description="N-linked (GlcNAc...) asparagine; by host" evidence="1">
    <location>
        <position position="727"/>
    </location>
</feature>
<feature type="glycosylation site" description="N-linked (GlcNAc...) asparagine; by host" evidence="1">
    <location>
        <position position="750"/>
    </location>
</feature>
<keyword id="KW-1169">Fusion of virus membrane with host cell membrane</keyword>
<keyword id="KW-1168">Fusion of virus membrane with host membrane</keyword>
<keyword id="KW-0325">Glycoprotein</keyword>
<keyword id="KW-1032">Host cell membrane</keyword>
<keyword id="KW-1039">Host endosome</keyword>
<keyword id="KW-1043">Host membrane</keyword>
<keyword id="KW-0472">Membrane</keyword>
<keyword id="KW-0730">Sialic acid</keyword>
<keyword id="KW-0732">Signal</keyword>
<keyword id="KW-0812">Transmembrane</keyword>
<keyword id="KW-1133">Transmembrane helix</keyword>
<keyword id="KW-0261">Viral envelope protein</keyword>
<keyword id="KW-1162">Viral penetration into host cytoplasm</keyword>
<keyword id="KW-0946">Virion</keyword>
<keyword id="KW-1160">Virus entry into host cell</keyword>
<name>GH_GAHVR</name>
<accession>P36336</accession>
<sequence>MGLPGSIVFLIMIHAFCAKKTPTNTLPSLLSLLGITDLPSLRLNILSLDGSANNQGSWVRDNTTFVYIGASSPANGVLFYMPTSHVQQMTFYKRPVSKLLASNNLIKFLNTGSYINHSFMTAMPPYRRNVQIPSDRSGLKLDDKDDAQPTGTNPPTELKNLKPIDVVNPEHRFILTSELTGTYVKHVCFVDPMDMLIPVDYAHIRTIIFGSDGAEVIMKIGITFASITISMKSAPPVELILSERARNISLIWPALKPYEPVDKFTRRPYLIYLLGPHMNASDMEIKSYINMIESVEESSNYDFQIAQTHAQLFIFAATPISDINDIYCFRVVTTRLFMSLVASVRNAFQSGYISFDEIIKTEANIKMITETLSTFALHSNPGTYFLLSGMHLRNENADIIKSLIRKTIINASKNTASLSILQHLYVLRSAYAFNISQESGNLGEHVSSISLELIIALHEESVRDTIAWNTSARHALYYAFASIFQRPPNEWDASRTARKALLFASSMCTEEHIVATELVIQEMYIKINVKNSPVHILDVYTPCVTALRMDISEHHHRLYAMSDVILHPVIEKYLENDSRGIDAEEELETKAELVITKLKTPLMRRLTIYASEVVTCSDADILEATALLVLPISGLGSYVVTRQLGIRGIVYNVDGVDVNNQLYITYVRLPCTTTAGNIVPMVLPRPLGSDCPYCGCVLLRYSTNGNLRHTIYISSQDLQRELIAGGNSSIRYFNPTIAQIYGTSLLLYPNGTIVRILAFESERVTIISATYVATATAGASIAISIAIITVRMRINNFRYNYHRYKKLSLYDDL</sequence>
<comment type="function">
    <text evidence="1">The heterodimer glycoprotein H-glycoprotein L is required for the fusion of viral and plasma membranes leading to virus entry into the host cell. Following initial binding to host receptor, membrane fusion is mediated by the fusion machinery composed of gB and the heterodimer gH/gL. May also be involved in the fusion between the virion envelope and the outer nuclear membrane during virion morphogenesis.</text>
</comment>
<comment type="subunit">
    <text evidence="1">Interacts with glycoprotein L (gL); this interaction is necessary for the correct processing and cell surface expression of gH. The heterodimer gH/gL seems to interact with gB trimers during fusion.</text>
</comment>
<comment type="subcellular location">
    <subcellularLocation>
        <location evidence="1">Virion membrane</location>
        <topology evidence="1">Single-pass type I membrane protein</topology>
    </subcellularLocation>
    <subcellularLocation>
        <location evidence="1">Host cell membrane</location>
        <topology evidence="1">Single-pass type I membrane protein</topology>
    </subcellularLocation>
    <subcellularLocation>
        <location evidence="1">Host endosome membrane</location>
        <topology evidence="1">Single-pass type I membrane protein</topology>
    </subcellularLocation>
    <text evidence="1">During virion morphogenesis, this protein probably accumulates in the endosomes and trans-Golgi where secondary envelopment occurs. It is probably transported to the cell surface from where it is endocytosed and directed to the trans-Golgi network (TGN).</text>
</comment>
<comment type="PTM">
    <text evidence="1">N-glycosylated, O-glycosylated, and sialylated.</text>
</comment>
<comment type="similarity">
    <text evidence="1">Belongs to the herpesviridae glycoprotein H family.</text>
</comment>